<accession>C4L953</accession>
<sequence length="207" mass="23261">MQHKQAMQTMALAAVCQAAWLVQQVARNGSCDEESMRCLLQGVLITDPNNAESVYPDRTLLREGYKTLVEQLGNNRNPKNVELTRYVIGMVALERKLSGKRRVLSALAERVSQVKRQAFHFDLLTDTVLSNLAGIYSDQISNLGPRIQVSGAPLYLQQPQVQHKIRALLLAGIRACVLWRQLGGRRRQILFFRKKVIAAAEAALRQL</sequence>
<organism>
    <name type="scientific">Tolumonas auensis (strain DSM 9187 / NBRC 110442 / TA 4)</name>
    <dbReference type="NCBI Taxonomy" id="595494"/>
    <lineage>
        <taxon>Bacteria</taxon>
        <taxon>Pseudomonadati</taxon>
        <taxon>Pseudomonadota</taxon>
        <taxon>Gammaproteobacteria</taxon>
        <taxon>Aeromonadales</taxon>
        <taxon>Aeromonadaceae</taxon>
        <taxon>Tolumonas</taxon>
    </lineage>
</organism>
<feature type="chain" id="PRO_1000212631" description="High frequency lysogenization protein HflD homolog">
    <location>
        <begin position="1"/>
        <end position="207"/>
    </location>
</feature>
<gene>
    <name evidence="1" type="primary">hflD</name>
    <name type="ordered locus">Tola_2326</name>
</gene>
<name>HFLD_TOLAT</name>
<proteinExistence type="inferred from homology"/>
<evidence type="ECO:0000255" key="1">
    <source>
        <dbReference type="HAMAP-Rule" id="MF_00695"/>
    </source>
</evidence>
<keyword id="KW-0997">Cell inner membrane</keyword>
<keyword id="KW-1003">Cell membrane</keyword>
<keyword id="KW-0963">Cytoplasm</keyword>
<keyword id="KW-0472">Membrane</keyword>
<keyword id="KW-1185">Reference proteome</keyword>
<reference key="1">
    <citation type="submission" date="2009-05" db="EMBL/GenBank/DDBJ databases">
        <title>Complete sequence of Tolumonas auensis DSM 9187.</title>
        <authorList>
            <consortium name="US DOE Joint Genome Institute"/>
            <person name="Lucas S."/>
            <person name="Copeland A."/>
            <person name="Lapidus A."/>
            <person name="Glavina del Rio T."/>
            <person name="Tice H."/>
            <person name="Bruce D."/>
            <person name="Goodwin L."/>
            <person name="Pitluck S."/>
            <person name="Chertkov O."/>
            <person name="Brettin T."/>
            <person name="Detter J.C."/>
            <person name="Han C."/>
            <person name="Larimer F."/>
            <person name="Land M."/>
            <person name="Hauser L."/>
            <person name="Kyrpides N."/>
            <person name="Mikhailova N."/>
            <person name="Spring S."/>
            <person name="Beller H."/>
        </authorList>
    </citation>
    <scope>NUCLEOTIDE SEQUENCE [LARGE SCALE GENOMIC DNA]</scope>
    <source>
        <strain>DSM 9187 / NBRC 110442 / TA 4</strain>
    </source>
</reference>
<comment type="subcellular location">
    <subcellularLocation>
        <location>Cytoplasm</location>
    </subcellularLocation>
    <subcellularLocation>
        <location evidence="1">Cell inner membrane</location>
        <topology evidence="1">Peripheral membrane protein</topology>
        <orientation evidence="1">Cytoplasmic side</orientation>
    </subcellularLocation>
</comment>
<comment type="similarity">
    <text evidence="1">Belongs to the HflD family.</text>
</comment>
<protein>
    <recommendedName>
        <fullName evidence="1">High frequency lysogenization protein HflD homolog</fullName>
    </recommendedName>
</protein>
<dbReference type="EMBL" id="CP001616">
    <property type="protein sequence ID" value="ACQ93923.1"/>
    <property type="molecule type" value="Genomic_DNA"/>
</dbReference>
<dbReference type="RefSeq" id="WP_015879391.1">
    <property type="nucleotide sequence ID" value="NC_012691.1"/>
</dbReference>
<dbReference type="SMR" id="C4L953"/>
<dbReference type="STRING" id="595494.Tola_2326"/>
<dbReference type="KEGG" id="tau:Tola_2326"/>
<dbReference type="eggNOG" id="COG2915">
    <property type="taxonomic scope" value="Bacteria"/>
</dbReference>
<dbReference type="HOGENOM" id="CLU_098920_0_0_6"/>
<dbReference type="OrthoDB" id="9788031at2"/>
<dbReference type="Proteomes" id="UP000009073">
    <property type="component" value="Chromosome"/>
</dbReference>
<dbReference type="GO" id="GO:0005737">
    <property type="term" value="C:cytoplasm"/>
    <property type="evidence" value="ECO:0007669"/>
    <property type="project" value="UniProtKB-SubCell"/>
</dbReference>
<dbReference type="GO" id="GO:0005886">
    <property type="term" value="C:plasma membrane"/>
    <property type="evidence" value="ECO:0007669"/>
    <property type="project" value="UniProtKB-SubCell"/>
</dbReference>
<dbReference type="Gene3D" id="1.10.3890.10">
    <property type="entry name" value="HflD-like"/>
    <property type="match status" value="1"/>
</dbReference>
<dbReference type="HAMAP" id="MF_00695">
    <property type="entry name" value="HflD_protein"/>
    <property type="match status" value="1"/>
</dbReference>
<dbReference type="InterPro" id="IPR007451">
    <property type="entry name" value="HflD"/>
</dbReference>
<dbReference type="InterPro" id="IPR035932">
    <property type="entry name" value="HflD-like_sf"/>
</dbReference>
<dbReference type="NCBIfam" id="NF001246">
    <property type="entry name" value="PRK00218.1-2"/>
    <property type="match status" value="1"/>
</dbReference>
<dbReference type="NCBIfam" id="NF001248">
    <property type="entry name" value="PRK00218.1-4"/>
    <property type="match status" value="1"/>
</dbReference>
<dbReference type="PANTHER" id="PTHR38100">
    <property type="entry name" value="HIGH FREQUENCY LYSOGENIZATION PROTEIN HFLD"/>
    <property type="match status" value="1"/>
</dbReference>
<dbReference type="PANTHER" id="PTHR38100:SF1">
    <property type="entry name" value="HIGH FREQUENCY LYSOGENIZATION PROTEIN HFLD"/>
    <property type="match status" value="1"/>
</dbReference>
<dbReference type="Pfam" id="PF04356">
    <property type="entry name" value="DUF489"/>
    <property type="match status" value="1"/>
</dbReference>
<dbReference type="SUPFAM" id="SSF101322">
    <property type="entry name" value="YcfC-like"/>
    <property type="match status" value="1"/>
</dbReference>